<feature type="chain" id="PRO_0000355251" description="Snaclec bothroalternin subunit alpha/beta">
    <location>
        <begin position="1"/>
        <end position="25" status="greater than"/>
    </location>
</feature>
<feature type="domain" description="C-type lectin" evidence="1">
    <location>
        <begin position="1"/>
        <end position="25" status="greater than"/>
    </location>
</feature>
<feature type="disulfide bond" evidence="1">
    <location>
        <begin position="2"/>
        <end position="13"/>
    </location>
</feature>
<feature type="sequence variant">
    <original>N</original>
    <variation>P</variation>
    <location>
        <position position="8"/>
    </location>
</feature>
<feature type="sequence variant">
    <original>H</original>
    <variation>Y</variation>
    <location>
        <position position="9"/>
    </location>
</feature>
<feature type="sequence variant">
    <original>W</original>
    <variation>G</variation>
    <location>
        <position position="20"/>
    </location>
</feature>
<feature type="non-terminal residue">
    <location>
        <position position="25"/>
    </location>
</feature>
<dbReference type="SMR" id="P0C8I9"/>
<dbReference type="GO" id="GO:0005576">
    <property type="term" value="C:extracellular region"/>
    <property type="evidence" value="ECO:0007669"/>
    <property type="project" value="UniProtKB-SubCell"/>
</dbReference>
<dbReference type="GO" id="GO:0090729">
    <property type="term" value="F:toxin activity"/>
    <property type="evidence" value="ECO:0007669"/>
    <property type="project" value="UniProtKB-KW"/>
</dbReference>
<dbReference type="Gene3D" id="3.10.100.10">
    <property type="entry name" value="Mannose-Binding Protein A, subunit A"/>
    <property type="match status" value="1"/>
</dbReference>
<dbReference type="InterPro" id="IPR016186">
    <property type="entry name" value="C-type_lectin-like/link_sf"/>
</dbReference>
<dbReference type="InterPro" id="IPR016187">
    <property type="entry name" value="CTDL_fold"/>
</dbReference>
<dbReference type="SUPFAM" id="SSF56436">
    <property type="entry name" value="C-type lectin-like"/>
    <property type="match status" value="1"/>
</dbReference>
<proteinExistence type="evidence at protein level"/>
<evidence type="ECO:0000255" key="1">
    <source>
        <dbReference type="PROSITE-ProRule" id="PRU00040"/>
    </source>
</evidence>
<evidence type="ECO:0000269" key="2">
    <source>
    </source>
</evidence>
<evidence type="ECO:0000305" key="3"/>
<organism>
    <name type="scientific">Bothrops alternatus</name>
    <name type="common">Urutu</name>
    <name type="synonym">Rhinocerophis alternatus</name>
    <dbReference type="NCBI Taxonomy" id="64174"/>
    <lineage>
        <taxon>Eukaryota</taxon>
        <taxon>Metazoa</taxon>
        <taxon>Chordata</taxon>
        <taxon>Craniata</taxon>
        <taxon>Vertebrata</taxon>
        <taxon>Euteleostomi</taxon>
        <taxon>Lepidosauria</taxon>
        <taxon>Squamata</taxon>
        <taxon>Bifurcata</taxon>
        <taxon>Unidentata</taxon>
        <taxon>Episquamata</taxon>
        <taxon>Toxicofera</taxon>
        <taxon>Serpentes</taxon>
        <taxon>Colubroidea</taxon>
        <taxon>Viperidae</taxon>
        <taxon>Crotalinae</taxon>
        <taxon>Bothrops</taxon>
    </lineage>
</organism>
<name>SLAB_BOTAL</name>
<keyword id="KW-0903">Direct protein sequencing</keyword>
<keyword id="KW-1015">Disulfide bond</keyword>
<keyword id="KW-1199">Hemostasis impairing toxin</keyword>
<keyword id="KW-1201">Platelet aggregation inhibiting toxin</keyword>
<keyword id="KW-0964">Secreted</keyword>
<keyword id="KW-0800">Toxin</keyword>
<accession>P0C8I9</accession>
<comment type="function">
    <text evidence="2">Thrombin (F2) inhibitor that inhibits aggregation of rabbit platelets induced by alpha-thrombin.</text>
</comment>
<comment type="subunit">
    <text evidence="2">Heterodimer of subunits alpha and beta; disulfide-linked.</text>
</comment>
<comment type="subcellular location">
    <subcellularLocation>
        <location>Secreted</location>
    </subcellularLocation>
</comment>
<comment type="tissue specificity">
    <text>Expressed by the venom gland.</text>
</comment>
<comment type="similarity">
    <text evidence="3">Belongs to the snaclec family.</text>
</comment>
<comment type="caution">
    <text evidence="3">Sequence shown and variants are a mixture of subunits alpha and beta, since the correspondence of each variant to each subunit is not yet defined.</text>
</comment>
<reference key="1">
    <citation type="journal article" date="1998" name="Toxicon">
        <title>Bothroalternin, a thrombin inhibitor from the venom of Bothrops alternatus.</title>
        <authorList>
            <person name="Castro H.C."/>
            <person name="Dutra D.L."/>
            <person name="Oliveira-Carvalho A.L."/>
            <person name="Zingali R.B."/>
        </authorList>
    </citation>
    <scope>PROTEIN SEQUENCE</scope>
    <scope>FUNCTION</scope>
    <scope>SUBUNIT</scope>
    <scope>VARIANTS</scope>
    <source>
        <tissue>Venom</tissue>
    </source>
</reference>
<sequence>DCPSDWSNHEGHCYRVFNEWMNWAD</sequence>
<protein>
    <recommendedName>
        <fullName>Snaclec bothroalternin subunit alpha/beta</fullName>
    </recommendedName>
    <alternativeName>
        <fullName>Bothrojaracin-like protein</fullName>
    </alternativeName>
</protein>